<protein>
    <recommendedName>
        <fullName evidence="1">HTH-type transcriptional regulator ArgP</fullName>
    </recommendedName>
</protein>
<dbReference type="EMBL" id="FM180568">
    <property type="protein sequence ID" value="CAS10714.1"/>
    <property type="molecule type" value="Genomic_DNA"/>
</dbReference>
<dbReference type="RefSeq" id="WP_000828351.1">
    <property type="nucleotide sequence ID" value="NC_011601.1"/>
</dbReference>
<dbReference type="SMR" id="B7UHW2"/>
<dbReference type="GeneID" id="93779084"/>
<dbReference type="KEGG" id="ecg:E2348C_3166"/>
<dbReference type="HOGENOM" id="CLU_063829_0_0_6"/>
<dbReference type="Proteomes" id="UP000008205">
    <property type="component" value="Chromosome"/>
</dbReference>
<dbReference type="GO" id="GO:0003677">
    <property type="term" value="F:DNA binding"/>
    <property type="evidence" value="ECO:0007669"/>
    <property type="project" value="UniProtKB-UniRule"/>
</dbReference>
<dbReference type="GO" id="GO:0003700">
    <property type="term" value="F:DNA-binding transcription factor activity"/>
    <property type="evidence" value="ECO:0007669"/>
    <property type="project" value="UniProtKB-UniRule"/>
</dbReference>
<dbReference type="CDD" id="cd08428">
    <property type="entry name" value="PBP2_IciA_ArgP"/>
    <property type="match status" value="1"/>
</dbReference>
<dbReference type="FunFam" id="1.10.10.10:FF:000061">
    <property type="entry name" value="HTH-type transcriptional regulator ArgP"/>
    <property type="match status" value="1"/>
</dbReference>
<dbReference type="FunFam" id="3.40.190.290:FF:000002">
    <property type="entry name" value="HTH-type transcriptional regulator ArgP"/>
    <property type="match status" value="1"/>
</dbReference>
<dbReference type="Gene3D" id="3.40.190.290">
    <property type="match status" value="1"/>
</dbReference>
<dbReference type="Gene3D" id="1.10.10.10">
    <property type="entry name" value="Winged helix-like DNA-binding domain superfamily/Winged helix DNA-binding domain"/>
    <property type="match status" value="1"/>
</dbReference>
<dbReference type="HAMAP" id="MF_00513">
    <property type="entry name" value="HTH_type_ArgP"/>
    <property type="match status" value="1"/>
</dbReference>
<dbReference type="InterPro" id="IPR017685">
    <property type="entry name" value="ArgP"/>
</dbReference>
<dbReference type="InterPro" id="IPR023490">
    <property type="entry name" value="ArgP_gammaproteobact"/>
</dbReference>
<dbReference type="InterPro" id="IPR050176">
    <property type="entry name" value="LTTR"/>
</dbReference>
<dbReference type="InterPro" id="IPR005119">
    <property type="entry name" value="LysR_subst-bd"/>
</dbReference>
<dbReference type="InterPro" id="IPR000847">
    <property type="entry name" value="Tscrpt_reg_HTH_LysR"/>
</dbReference>
<dbReference type="InterPro" id="IPR036388">
    <property type="entry name" value="WH-like_DNA-bd_sf"/>
</dbReference>
<dbReference type="InterPro" id="IPR036390">
    <property type="entry name" value="WH_DNA-bd_sf"/>
</dbReference>
<dbReference type="NCBIfam" id="TIGR03298">
    <property type="entry name" value="argP"/>
    <property type="match status" value="1"/>
</dbReference>
<dbReference type="NCBIfam" id="NF002964">
    <property type="entry name" value="PRK03635.1"/>
    <property type="match status" value="1"/>
</dbReference>
<dbReference type="NCBIfam" id="NF009888">
    <property type="entry name" value="PRK13348.1"/>
    <property type="match status" value="1"/>
</dbReference>
<dbReference type="PANTHER" id="PTHR30579:SF2">
    <property type="entry name" value="HTH-TYPE TRANSCRIPTIONAL REGULATOR ARGP"/>
    <property type="match status" value="1"/>
</dbReference>
<dbReference type="PANTHER" id="PTHR30579">
    <property type="entry name" value="TRANSCRIPTIONAL REGULATOR"/>
    <property type="match status" value="1"/>
</dbReference>
<dbReference type="Pfam" id="PF00126">
    <property type="entry name" value="HTH_1"/>
    <property type="match status" value="1"/>
</dbReference>
<dbReference type="Pfam" id="PF03466">
    <property type="entry name" value="LysR_substrate"/>
    <property type="match status" value="1"/>
</dbReference>
<dbReference type="PRINTS" id="PR00039">
    <property type="entry name" value="HTHLYSR"/>
</dbReference>
<dbReference type="SUPFAM" id="SSF53850">
    <property type="entry name" value="Periplasmic binding protein-like II"/>
    <property type="match status" value="1"/>
</dbReference>
<dbReference type="SUPFAM" id="SSF46785">
    <property type="entry name" value="Winged helix' DNA-binding domain"/>
    <property type="match status" value="1"/>
</dbReference>
<dbReference type="PROSITE" id="PS50931">
    <property type="entry name" value="HTH_LYSR"/>
    <property type="match status" value="1"/>
</dbReference>
<name>ARGP_ECO27</name>
<feature type="chain" id="PRO_1000146106" description="HTH-type transcriptional regulator ArgP">
    <location>
        <begin position="1"/>
        <end position="297"/>
    </location>
</feature>
<feature type="domain" description="HTH lysR-type" evidence="1">
    <location>
        <begin position="4"/>
        <end position="60"/>
    </location>
</feature>
<feature type="DNA-binding region" description="H-T-H motif" evidence="1">
    <location>
        <begin position="21"/>
        <end position="40"/>
    </location>
</feature>
<keyword id="KW-0238">DNA-binding</keyword>
<keyword id="KW-1185">Reference proteome</keyword>
<keyword id="KW-0804">Transcription</keyword>
<keyword id="KW-0805">Transcription regulation</keyword>
<proteinExistence type="inferred from homology"/>
<evidence type="ECO:0000255" key="1">
    <source>
        <dbReference type="HAMAP-Rule" id="MF_00513"/>
    </source>
</evidence>
<evidence type="ECO:0000305" key="2"/>
<organism>
    <name type="scientific">Escherichia coli O127:H6 (strain E2348/69 / EPEC)</name>
    <dbReference type="NCBI Taxonomy" id="574521"/>
    <lineage>
        <taxon>Bacteria</taxon>
        <taxon>Pseudomonadati</taxon>
        <taxon>Pseudomonadota</taxon>
        <taxon>Gammaproteobacteria</taxon>
        <taxon>Enterobacterales</taxon>
        <taxon>Enterobacteriaceae</taxon>
        <taxon>Escherichia</taxon>
    </lineage>
</organism>
<reference key="1">
    <citation type="journal article" date="2009" name="J. Bacteriol.">
        <title>Complete genome sequence and comparative genome analysis of enteropathogenic Escherichia coli O127:H6 strain E2348/69.</title>
        <authorList>
            <person name="Iguchi A."/>
            <person name="Thomson N.R."/>
            <person name="Ogura Y."/>
            <person name="Saunders D."/>
            <person name="Ooka T."/>
            <person name="Henderson I.R."/>
            <person name="Harris D."/>
            <person name="Asadulghani M."/>
            <person name="Kurokawa K."/>
            <person name="Dean P."/>
            <person name="Kenny B."/>
            <person name="Quail M.A."/>
            <person name="Thurston S."/>
            <person name="Dougan G."/>
            <person name="Hayashi T."/>
            <person name="Parkhill J."/>
            <person name="Frankel G."/>
        </authorList>
    </citation>
    <scope>NUCLEOTIDE SEQUENCE [LARGE SCALE GENOMIC DNA]</scope>
    <source>
        <strain>E2348/69 / EPEC</strain>
    </source>
</reference>
<comment type="function">
    <text evidence="1">Controls the transcription of genes involved in arginine and lysine metabolism.</text>
</comment>
<comment type="subunit">
    <text evidence="1">Homodimer.</text>
</comment>
<comment type="similarity">
    <text evidence="2">Belongs to the LysR transcriptional regulatory family.</text>
</comment>
<gene>
    <name evidence="1" type="primary">argP</name>
    <name type="synonym">iciA</name>
    <name type="ordered locus">E2348C_3166</name>
</gene>
<accession>B7UHW2</accession>
<sequence length="297" mass="33472">MKRPDYRTLQALDAVIRERGFERAAQKLCITQSAVSQRIKQLENMFGQPLLVRTVPPRPTEQGQKLLALLRQVELLEEEWLGDEQTGSTPLLLSLAVNADSLATWLLPALAPVLADSPIRLNLQVEDETRTQERLRRGEVVGAVSIQHQALPSCLVDKLGALDYLFVSSKPFAEKYFPNGVTRSALLKAPVVAFDHLDDMHQAFLQQNFDLPPGSVPCHIVNSSEAFVQLARQGTTCCMIPHLQIEKELASGELIDLTPGLFQRRMLYWHRFAPESRMMRKVTDALLDYGHKVLRQD</sequence>